<dbReference type="EC" id="4.1.1.-" evidence="1"/>
<dbReference type="SMR" id="P0CU76"/>
<dbReference type="OMA" id="GIRRWTQ"/>
<dbReference type="GO" id="GO:0016829">
    <property type="term" value="F:lyase activity"/>
    <property type="evidence" value="ECO:0007669"/>
    <property type="project" value="UniProtKB-KW"/>
</dbReference>
<dbReference type="GO" id="GO:0016491">
    <property type="term" value="F:oxidoreductase activity"/>
    <property type="evidence" value="ECO:0007669"/>
    <property type="project" value="InterPro"/>
</dbReference>
<dbReference type="Gene3D" id="3.30.70.100">
    <property type="match status" value="1"/>
</dbReference>
<dbReference type="InterPro" id="IPR011008">
    <property type="entry name" value="Dimeric_a/b-barrel"/>
</dbReference>
<dbReference type="InterPro" id="IPR009799">
    <property type="entry name" value="EthD_dom"/>
</dbReference>
<dbReference type="Pfam" id="PF07110">
    <property type="entry name" value="EthD"/>
    <property type="match status" value="1"/>
</dbReference>
<dbReference type="SUPFAM" id="SSF54909">
    <property type="entry name" value="Dimeric alpha+beta barrel"/>
    <property type="match status" value="1"/>
</dbReference>
<gene>
    <name evidence="3" type="primary">claH</name>
    <name type="ORF">Clafu190728</name>
</gene>
<proteinExistence type="evidence at protein level"/>
<accession>P0CU76</accession>
<sequence length="154" mass="17845">MATATTTTATESPSNSGRRQARYLCLTILGYRKPGMSEEDYRNHMVNVSAPLTKDLMVKYGVKRWTQIHNQSETKALMSQLFDPQMCNLADYDCFSQVVFENIEDYKRMKQDPWYKKHLVGDHENFADTKRSQMTIGWVEEFVRDGQVVEGFKG</sequence>
<feature type="chain" id="PRO_0000445896" description="Decarboxylase claH">
    <location>
        <begin position="1"/>
        <end position="154"/>
    </location>
</feature>
<organism>
    <name type="scientific">Passalora fulva</name>
    <name type="common">Tomato leaf mold</name>
    <name type="synonym">Cladosporium fulvum</name>
    <dbReference type="NCBI Taxonomy" id="5499"/>
    <lineage>
        <taxon>Eukaryota</taxon>
        <taxon>Fungi</taxon>
        <taxon>Dikarya</taxon>
        <taxon>Ascomycota</taxon>
        <taxon>Pezizomycotina</taxon>
        <taxon>Dothideomycetes</taxon>
        <taxon>Dothideomycetidae</taxon>
        <taxon>Mycosphaerellales</taxon>
        <taxon>Mycosphaerellaceae</taxon>
        <taxon>Fulvia</taxon>
    </lineage>
</organism>
<keyword id="KW-0456">Lyase</keyword>
<evidence type="ECO:0000269" key="1">
    <source>
    </source>
</evidence>
<evidence type="ECO:0000269" key="2">
    <source>
    </source>
</evidence>
<evidence type="ECO:0000303" key="3">
    <source>
    </source>
</evidence>
<evidence type="ECO:0000305" key="4"/>
<name>CLAH_PASFU</name>
<comment type="function">
    <text evidence="1">Decarboxylase involved in the biosynthesis of the bianthraquinone cladofulvin, a conidial pigment not required for virulence but that plays a role in fitness and resistance to environmental stresses including UV light and low-temperature stress (PubMed:27274078). The pathway begins with the synthesis of atrochrysone thioester by the polyketide synthase (PKS) claG. The atrochrysone carboxyl ACP thioesterase claF then breaks the thioester bond and releases the atrochrysone carboxylic acid from claG (PubMed:27274078). This compound is decarboxylated by claH to yield emodin, which is further converted to chrysophanol hydroquinone by the reductase claC and the dehydratase claB (PubMed:27274078). The cytochrome monooxygenase P450 claM then catalyzes the dimerization of nataloe-emodin to cladofulvin (PubMed:27274078).</text>
</comment>
<comment type="catalytic activity">
    <reaction evidence="1">
        <text>atrochrysone carboxylate + H(+) = atrochrysone + CO2</text>
        <dbReference type="Rhea" id="RHEA:64264"/>
        <dbReference type="ChEBI" id="CHEBI:15378"/>
        <dbReference type="ChEBI" id="CHEBI:16526"/>
        <dbReference type="ChEBI" id="CHEBI:149713"/>
        <dbReference type="ChEBI" id="CHEBI:150016"/>
    </reaction>
    <physiologicalReaction direction="left-to-right" evidence="1">
        <dbReference type="Rhea" id="RHEA:64265"/>
    </physiologicalReaction>
</comment>
<comment type="pathway">
    <text evidence="1">Pigment biosynthesis.</text>
</comment>
<comment type="induction">
    <text evidence="1 2">Expression is positively regulated by the transcriptional regulator wor1 (PubMed:27274078). Expression is down-regulated during biotrophic growth within tomato leaves (PubMed:27997759).</text>
</comment>
<comment type="miscellaneous">
    <text evidence="1">Contrary to the other identified cladofulvin biosynthesis genes, claH is not locatilzed in the cladofulvin cluster, but is co-regulated with the cluster genes.</text>
</comment>
<comment type="similarity">
    <text evidence="4">Belongs to the tpcK family.</text>
</comment>
<reference key="1">
    <citation type="journal article" date="2016" name="Proc. Natl. Acad. Sci. U.S.A.">
        <title>Elucidation of cladofulvin biosynthesis reveals a cytochrome P450 monooxygenase required for anthraquinone dimerization.</title>
        <authorList>
            <person name="Griffiths S."/>
            <person name="Mesarich C.H."/>
            <person name="Saccomanno B."/>
            <person name="Vaisberg A."/>
            <person name="De Wit P.J."/>
            <person name="Cox R."/>
            <person name="Collemare J."/>
        </authorList>
    </citation>
    <scope>INDUCTION</scope>
    <scope>FUNCTION</scope>
    <scope>CATALYTIC ACTIVITY</scope>
    <scope>PATHWAY</scope>
</reference>
<reference key="2">
    <citation type="journal article" date="2018" name="Mol. Plant Pathol.">
        <title>Down-regulation of cladofulvin biosynthesis is required for biotrophic growth of Cladosporium fulvum on tomato.</title>
        <authorList>
            <person name="Griffiths S."/>
            <person name="Mesarich C.H."/>
            <person name="Overdijk E.J.R."/>
            <person name="Saccomanno B."/>
            <person name="de Wit P.J.G.M."/>
            <person name="Collemare J."/>
        </authorList>
    </citation>
    <scope>INDUCTION</scope>
</reference>
<protein>
    <recommendedName>
        <fullName evidence="3">Decarboxylase claH</fullName>
        <ecNumber evidence="1">4.1.1.-</ecNumber>
    </recommendedName>
    <alternativeName>
        <fullName evidence="3">Cladofulvin biosynthesis protein H</fullName>
    </alternativeName>
</protein>